<name>RSMH_HELPJ</name>
<organism>
    <name type="scientific">Helicobacter pylori (strain J99 / ATCC 700824)</name>
    <name type="common">Campylobacter pylori J99</name>
    <dbReference type="NCBI Taxonomy" id="85963"/>
    <lineage>
        <taxon>Bacteria</taxon>
        <taxon>Pseudomonadati</taxon>
        <taxon>Campylobacterota</taxon>
        <taxon>Epsilonproteobacteria</taxon>
        <taxon>Campylobacterales</taxon>
        <taxon>Helicobacteraceae</taxon>
        <taxon>Helicobacter</taxon>
    </lineage>
</organism>
<dbReference type="EC" id="2.1.1.199" evidence="1"/>
<dbReference type="EMBL" id="AE001439">
    <property type="protein sequence ID" value="AAD06233.1"/>
    <property type="molecule type" value="Genomic_DNA"/>
</dbReference>
<dbReference type="PIR" id="H71904">
    <property type="entry name" value="H71904"/>
</dbReference>
<dbReference type="RefSeq" id="WP_001155535.1">
    <property type="nucleotide sequence ID" value="NC_000921.1"/>
</dbReference>
<dbReference type="SMR" id="Q9ZLD4"/>
<dbReference type="KEGG" id="hpj:jhp_0646"/>
<dbReference type="PATRIC" id="fig|85963.30.peg.337"/>
<dbReference type="eggNOG" id="COG0275">
    <property type="taxonomic scope" value="Bacteria"/>
</dbReference>
<dbReference type="Proteomes" id="UP000000804">
    <property type="component" value="Chromosome"/>
</dbReference>
<dbReference type="GO" id="GO:0005737">
    <property type="term" value="C:cytoplasm"/>
    <property type="evidence" value="ECO:0007669"/>
    <property type="project" value="UniProtKB-SubCell"/>
</dbReference>
<dbReference type="GO" id="GO:0071424">
    <property type="term" value="F:rRNA (cytosine-N4-)-methyltransferase activity"/>
    <property type="evidence" value="ECO:0007669"/>
    <property type="project" value="UniProtKB-UniRule"/>
</dbReference>
<dbReference type="GO" id="GO:0070475">
    <property type="term" value="P:rRNA base methylation"/>
    <property type="evidence" value="ECO:0007669"/>
    <property type="project" value="UniProtKB-UniRule"/>
</dbReference>
<dbReference type="FunFam" id="1.10.150.170:FF:000008">
    <property type="entry name" value="Ribosomal RNA small subunit methyltransferase H"/>
    <property type="match status" value="1"/>
</dbReference>
<dbReference type="Gene3D" id="1.10.150.170">
    <property type="entry name" value="Putative methyltransferase TM0872, insert domain"/>
    <property type="match status" value="1"/>
</dbReference>
<dbReference type="Gene3D" id="3.40.50.150">
    <property type="entry name" value="Vaccinia Virus protein VP39"/>
    <property type="match status" value="1"/>
</dbReference>
<dbReference type="HAMAP" id="MF_01007">
    <property type="entry name" value="16SrRNA_methyltr_H"/>
    <property type="match status" value="1"/>
</dbReference>
<dbReference type="InterPro" id="IPR002903">
    <property type="entry name" value="RsmH"/>
</dbReference>
<dbReference type="InterPro" id="IPR023397">
    <property type="entry name" value="SAM-dep_MeTrfase_MraW_recog"/>
</dbReference>
<dbReference type="InterPro" id="IPR029063">
    <property type="entry name" value="SAM-dependent_MTases_sf"/>
</dbReference>
<dbReference type="NCBIfam" id="TIGR00006">
    <property type="entry name" value="16S rRNA (cytosine(1402)-N(4))-methyltransferase RsmH"/>
    <property type="match status" value="1"/>
</dbReference>
<dbReference type="PANTHER" id="PTHR11265:SF0">
    <property type="entry name" value="12S RRNA N4-METHYLCYTIDINE METHYLTRANSFERASE"/>
    <property type="match status" value="1"/>
</dbReference>
<dbReference type="PANTHER" id="PTHR11265">
    <property type="entry name" value="S-ADENOSYL-METHYLTRANSFERASE MRAW"/>
    <property type="match status" value="1"/>
</dbReference>
<dbReference type="Pfam" id="PF01795">
    <property type="entry name" value="Methyltransf_5"/>
    <property type="match status" value="1"/>
</dbReference>
<dbReference type="PIRSF" id="PIRSF004486">
    <property type="entry name" value="MraW"/>
    <property type="match status" value="1"/>
</dbReference>
<dbReference type="SUPFAM" id="SSF81799">
    <property type="entry name" value="Putative methyltransferase TM0872, insert domain"/>
    <property type="match status" value="1"/>
</dbReference>
<dbReference type="SUPFAM" id="SSF53335">
    <property type="entry name" value="S-adenosyl-L-methionine-dependent methyltransferases"/>
    <property type="match status" value="1"/>
</dbReference>
<keyword id="KW-0963">Cytoplasm</keyword>
<keyword id="KW-0489">Methyltransferase</keyword>
<keyword id="KW-0698">rRNA processing</keyword>
<keyword id="KW-0949">S-adenosyl-L-methionine</keyword>
<keyword id="KW-0808">Transferase</keyword>
<comment type="function">
    <text evidence="1">Specifically methylates the N4 position of cytidine in position 1402 (C1402) of 16S rRNA.</text>
</comment>
<comment type="catalytic activity">
    <reaction evidence="1">
        <text>cytidine(1402) in 16S rRNA + S-adenosyl-L-methionine = N(4)-methylcytidine(1402) in 16S rRNA + S-adenosyl-L-homocysteine + H(+)</text>
        <dbReference type="Rhea" id="RHEA:42928"/>
        <dbReference type="Rhea" id="RHEA-COMP:10286"/>
        <dbReference type="Rhea" id="RHEA-COMP:10287"/>
        <dbReference type="ChEBI" id="CHEBI:15378"/>
        <dbReference type="ChEBI" id="CHEBI:57856"/>
        <dbReference type="ChEBI" id="CHEBI:59789"/>
        <dbReference type="ChEBI" id="CHEBI:74506"/>
        <dbReference type="ChEBI" id="CHEBI:82748"/>
        <dbReference type="EC" id="2.1.1.199"/>
    </reaction>
</comment>
<comment type="subcellular location">
    <subcellularLocation>
        <location evidence="1">Cytoplasm</location>
    </subcellularLocation>
</comment>
<comment type="similarity">
    <text evidence="1">Belongs to the methyltransferase superfamily. RsmH family.</text>
</comment>
<gene>
    <name evidence="1" type="primary">rsmH</name>
    <name type="synonym">mraW</name>
    <name type="ordered locus">jhp_0646</name>
</gene>
<protein>
    <recommendedName>
        <fullName evidence="1">Ribosomal RNA small subunit methyltransferase H</fullName>
        <ecNumber evidence="1">2.1.1.199</ecNumber>
    </recommendedName>
    <alternativeName>
        <fullName evidence="1">16S rRNA m(4)C1402 methyltransferase</fullName>
    </alternativeName>
    <alternativeName>
        <fullName evidence="1">rRNA (cytosine-N(4)-)-methyltransferase RsmH</fullName>
    </alternativeName>
</protein>
<proteinExistence type="inferred from homology"/>
<sequence>MQEIENLHQSVLLQEVLQAFTPLEEGILIDCTLGLGGHSKAILSQKPHLKLIGIDKDKFAQEIAKERLKEFEGRYNLLSGGFAKRFKEALEIHGERIKGVLVDLGVSSLQLDDDNRGFNFRSHALDMRMDLESELNAQKVINSYPVVALEKIFRDYGEIKEYKKIAHKIAERRAKKPFKDAKDLSEFLSSLSKNKKIHPATLVFQAVRIEVNSELEELKEFLQCARNLKEAILCVISFHSLEDALVKNAFKDYAKNCICDPSSFKCACSNNHALGAILTKKPITPSPEEIKNNRRSRSAKMRVFQFKP</sequence>
<evidence type="ECO:0000255" key="1">
    <source>
        <dbReference type="HAMAP-Rule" id="MF_01007"/>
    </source>
</evidence>
<feature type="chain" id="PRO_0000108639" description="Ribosomal RNA small subunit methyltransferase H">
    <location>
        <begin position="1"/>
        <end position="308"/>
    </location>
</feature>
<feature type="binding site" evidence="1">
    <location>
        <begin position="36"/>
        <end position="38"/>
    </location>
    <ligand>
        <name>S-adenosyl-L-methionine</name>
        <dbReference type="ChEBI" id="CHEBI:59789"/>
    </ligand>
</feature>
<feature type="binding site" evidence="1">
    <location>
        <position position="55"/>
    </location>
    <ligand>
        <name>S-adenosyl-L-methionine</name>
        <dbReference type="ChEBI" id="CHEBI:59789"/>
    </ligand>
</feature>
<feature type="binding site" evidence="1">
    <location>
        <position position="82"/>
    </location>
    <ligand>
        <name>S-adenosyl-L-methionine</name>
        <dbReference type="ChEBI" id="CHEBI:59789"/>
    </ligand>
</feature>
<feature type="binding site" evidence="1">
    <location>
        <position position="103"/>
    </location>
    <ligand>
        <name>S-adenosyl-L-methionine</name>
        <dbReference type="ChEBI" id="CHEBI:59789"/>
    </ligand>
</feature>
<feature type="binding site" evidence="1">
    <location>
        <position position="110"/>
    </location>
    <ligand>
        <name>S-adenosyl-L-methionine</name>
        <dbReference type="ChEBI" id="CHEBI:59789"/>
    </ligand>
</feature>
<reference key="1">
    <citation type="journal article" date="1999" name="Nature">
        <title>Genomic sequence comparison of two unrelated isolates of the human gastric pathogen Helicobacter pylori.</title>
        <authorList>
            <person name="Alm R.A."/>
            <person name="Ling L.-S.L."/>
            <person name="Moir D.T."/>
            <person name="King B.L."/>
            <person name="Brown E.D."/>
            <person name="Doig P.C."/>
            <person name="Smith D.R."/>
            <person name="Noonan B."/>
            <person name="Guild B.C."/>
            <person name="deJonge B.L."/>
            <person name="Carmel G."/>
            <person name="Tummino P.J."/>
            <person name="Caruso A."/>
            <person name="Uria-Nickelsen M."/>
            <person name="Mills D.M."/>
            <person name="Ives C."/>
            <person name="Gibson R."/>
            <person name="Merberg D."/>
            <person name="Mills S.D."/>
            <person name="Jiang Q."/>
            <person name="Taylor D.E."/>
            <person name="Vovis G.F."/>
            <person name="Trust T.J."/>
        </authorList>
    </citation>
    <scope>NUCLEOTIDE SEQUENCE [LARGE SCALE GENOMIC DNA]</scope>
    <source>
        <strain>J99 / ATCC 700824</strain>
    </source>
</reference>
<accession>Q9ZLD4</accession>